<feature type="chain" id="PRO_0000377333" description="tRNA dimethylallyltransferase">
    <location>
        <begin position="1"/>
        <end position="315"/>
    </location>
</feature>
<feature type="region of interest" description="Interaction with substrate tRNA" evidence="1">
    <location>
        <begin position="38"/>
        <end position="41"/>
    </location>
</feature>
<feature type="binding site" evidence="1">
    <location>
        <begin position="13"/>
        <end position="20"/>
    </location>
    <ligand>
        <name>ATP</name>
        <dbReference type="ChEBI" id="CHEBI:30616"/>
    </ligand>
</feature>
<feature type="binding site" evidence="1">
    <location>
        <begin position="15"/>
        <end position="20"/>
    </location>
    <ligand>
        <name>substrate</name>
    </ligand>
</feature>
<feature type="site" description="Interaction with substrate tRNA" evidence="1">
    <location>
        <position position="104"/>
    </location>
</feature>
<evidence type="ECO:0000255" key="1">
    <source>
        <dbReference type="HAMAP-Rule" id="MF_00185"/>
    </source>
</evidence>
<sequence>MENDKPFIVVLVGPTAVGKTEFSIELAKKYNGEIISGDSMQVYKNMDIGTAKITLDEMSGIPHQMIDILEPDEPFSAYEFKNRAQKLIKEITHRGRVPIIVGGTGLYIQSLIYDYAFEDETISEAHSESVETQLAELDQLSNDELHQYLASFDEISAQDIHPNNRKRVRRAIQYYLKTKKLLSSRKKVQQFTENYDTLLLGIEMSRDILYQRINTRVDIMLERGLLSEVKQLVENGYETSQSMQAIGYKEIVPVINGQISLDEATNKLKQHSRNYAKRQMTWFKNKLDVLWLDREKMSLSLMLDEVSVQIQKRRT</sequence>
<keyword id="KW-0067">ATP-binding</keyword>
<keyword id="KW-0460">Magnesium</keyword>
<keyword id="KW-0547">Nucleotide-binding</keyword>
<keyword id="KW-1185">Reference proteome</keyword>
<keyword id="KW-0808">Transferase</keyword>
<keyword id="KW-0819">tRNA processing</keyword>
<accession>Q49X96</accession>
<organism>
    <name type="scientific">Staphylococcus saprophyticus subsp. saprophyticus (strain ATCC 15305 / DSM 20229 / NCIMB 8711 / NCTC 7292 / S-41)</name>
    <dbReference type="NCBI Taxonomy" id="342451"/>
    <lineage>
        <taxon>Bacteria</taxon>
        <taxon>Bacillati</taxon>
        <taxon>Bacillota</taxon>
        <taxon>Bacilli</taxon>
        <taxon>Bacillales</taxon>
        <taxon>Staphylococcaceae</taxon>
        <taxon>Staphylococcus</taxon>
    </lineage>
</organism>
<dbReference type="EC" id="2.5.1.75" evidence="1"/>
<dbReference type="EMBL" id="AP008934">
    <property type="protein sequence ID" value="BAE18602.1"/>
    <property type="molecule type" value="Genomic_DNA"/>
</dbReference>
<dbReference type="SMR" id="Q49X96"/>
<dbReference type="KEGG" id="ssp:SSP1457"/>
<dbReference type="eggNOG" id="COG0324">
    <property type="taxonomic scope" value="Bacteria"/>
</dbReference>
<dbReference type="HOGENOM" id="CLU_032616_0_1_9"/>
<dbReference type="OrthoDB" id="9776390at2"/>
<dbReference type="Proteomes" id="UP000006371">
    <property type="component" value="Chromosome"/>
</dbReference>
<dbReference type="GO" id="GO:0005524">
    <property type="term" value="F:ATP binding"/>
    <property type="evidence" value="ECO:0007669"/>
    <property type="project" value="UniProtKB-UniRule"/>
</dbReference>
<dbReference type="GO" id="GO:0052381">
    <property type="term" value="F:tRNA dimethylallyltransferase activity"/>
    <property type="evidence" value="ECO:0007669"/>
    <property type="project" value="UniProtKB-UniRule"/>
</dbReference>
<dbReference type="GO" id="GO:0006400">
    <property type="term" value="P:tRNA modification"/>
    <property type="evidence" value="ECO:0007669"/>
    <property type="project" value="TreeGrafter"/>
</dbReference>
<dbReference type="Gene3D" id="1.10.20.140">
    <property type="match status" value="1"/>
</dbReference>
<dbReference type="Gene3D" id="3.40.50.300">
    <property type="entry name" value="P-loop containing nucleotide triphosphate hydrolases"/>
    <property type="match status" value="1"/>
</dbReference>
<dbReference type="HAMAP" id="MF_00185">
    <property type="entry name" value="IPP_trans"/>
    <property type="match status" value="1"/>
</dbReference>
<dbReference type="InterPro" id="IPR039657">
    <property type="entry name" value="Dimethylallyltransferase"/>
</dbReference>
<dbReference type="InterPro" id="IPR018022">
    <property type="entry name" value="IPT"/>
</dbReference>
<dbReference type="InterPro" id="IPR027417">
    <property type="entry name" value="P-loop_NTPase"/>
</dbReference>
<dbReference type="NCBIfam" id="TIGR00174">
    <property type="entry name" value="miaA"/>
    <property type="match status" value="1"/>
</dbReference>
<dbReference type="PANTHER" id="PTHR11088">
    <property type="entry name" value="TRNA DIMETHYLALLYLTRANSFERASE"/>
    <property type="match status" value="1"/>
</dbReference>
<dbReference type="PANTHER" id="PTHR11088:SF60">
    <property type="entry name" value="TRNA DIMETHYLALLYLTRANSFERASE"/>
    <property type="match status" value="1"/>
</dbReference>
<dbReference type="Pfam" id="PF01715">
    <property type="entry name" value="IPPT"/>
    <property type="match status" value="1"/>
</dbReference>
<dbReference type="SUPFAM" id="SSF52540">
    <property type="entry name" value="P-loop containing nucleoside triphosphate hydrolases"/>
    <property type="match status" value="2"/>
</dbReference>
<comment type="function">
    <text evidence="1">Catalyzes the transfer of a dimethylallyl group onto the adenine at position 37 in tRNAs that read codons beginning with uridine, leading to the formation of N6-(dimethylallyl)adenosine (i(6)A).</text>
</comment>
<comment type="catalytic activity">
    <reaction evidence="1">
        <text>adenosine(37) in tRNA + dimethylallyl diphosphate = N(6)-dimethylallyladenosine(37) in tRNA + diphosphate</text>
        <dbReference type="Rhea" id="RHEA:26482"/>
        <dbReference type="Rhea" id="RHEA-COMP:10162"/>
        <dbReference type="Rhea" id="RHEA-COMP:10375"/>
        <dbReference type="ChEBI" id="CHEBI:33019"/>
        <dbReference type="ChEBI" id="CHEBI:57623"/>
        <dbReference type="ChEBI" id="CHEBI:74411"/>
        <dbReference type="ChEBI" id="CHEBI:74415"/>
        <dbReference type="EC" id="2.5.1.75"/>
    </reaction>
</comment>
<comment type="cofactor">
    <cofactor evidence="1">
        <name>Mg(2+)</name>
        <dbReference type="ChEBI" id="CHEBI:18420"/>
    </cofactor>
</comment>
<comment type="subunit">
    <text evidence="1">Monomer.</text>
</comment>
<comment type="similarity">
    <text evidence="1">Belongs to the IPP transferase family.</text>
</comment>
<protein>
    <recommendedName>
        <fullName evidence="1">tRNA dimethylallyltransferase</fullName>
        <ecNumber evidence="1">2.5.1.75</ecNumber>
    </recommendedName>
    <alternativeName>
        <fullName evidence="1">Dimethylallyl diphosphate:tRNA dimethylallyltransferase</fullName>
        <shortName evidence="1">DMAPP:tRNA dimethylallyltransferase</shortName>
        <shortName evidence="1">DMATase</shortName>
    </alternativeName>
    <alternativeName>
        <fullName evidence="1">Isopentenyl-diphosphate:tRNA isopentenyltransferase</fullName>
        <shortName evidence="1">IPP transferase</shortName>
        <shortName evidence="1">IPPT</shortName>
        <shortName evidence="1">IPTase</shortName>
    </alternativeName>
</protein>
<gene>
    <name evidence="1" type="primary">miaA</name>
    <name type="ordered locus">SSP1457</name>
</gene>
<name>MIAA_STAS1</name>
<reference key="1">
    <citation type="journal article" date="2005" name="Proc. Natl. Acad. Sci. U.S.A.">
        <title>Whole genome sequence of Staphylococcus saprophyticus reveals the pathogenesis of uncomplicated urinary tract infection.</title>
        <authorList>
            <person name="Kuroda M."/>
            <person name="Yamashita A."/>
            <person name="Hirakawa H."/>
            <person name="Kumano M."/>
            <person name="Morikawa K."/>
            <person name="Higashide M."/>
            <person name="Maruyama A."/>
            <person name="Inose Y."/>
            <person name="Matoba K."/>
            <person name="Toh H."/>
            <person name="Kuhara S."/>
            <person name="Hattori M."/>
            <person name="Ohta T."/>
        </authorList>
    </citation>
    <scope>NUCLEOTIDE SEQUENCE [LARGE SCALE GENOMIC DNA]</scope>
    <source>
        <strain>ATCC 15305 / DSM 20229 / NCIMB 8711 / NCTC 7292 / S-41</strain>
    </source>
</reference>
<proteinExistence type="inferred from homology"/>